<accession>A6U2R8</accession>
<proteinExistence type="inferred from homology"/>
<dbReference type="EC" id="3.4.21.-"/>
<dbReference type="EMBL" id="CP000736">
    <property type="protein sequence ID" value="ABR52736.1"/>
    <property type="status" value="ALT_INIT"/>
    <property type="molecule type" value="Genomic_DNA"/>
</dbReference>
<dbReference type="SMR" id="A6U2R8"/>
<dbReference type="MEROPS" id="S01.282"/>
<dbReference type="KEGG" id="sah:SaurJH1_1898"/>
<dbReference type="HOGENOM" id="CLU_073589_2_0_9"/>
<dbReference type="GO" id="GO:0005576">
    <property type="term" value="C:extracellular region"/>
    <property type="evidence" value="ECO:0007669"/>
    <property type="project" value="UniProtKB-SubCell"/>
</dbReference>
<dbReference type="GO" id="GO:0004252">
    <property type="term" value="F:serine-type endopeptidase activity"/>
    <property type="evidence" value="ECO:0007669"/>
    <property type="project" value="InterPro"/>
</dbReference>
<dbReference type="GO" id="GO:0006508">
    <property type="term" value="P:proteolysis"/>
    <property type="evidence" value="ECO:0007669"/>
    <property type="project" value="UniProtKB-KW"/>
</dbReference>
<dbReference type="Gene3D" id="2.40.10.10">
    <property type="entry name" value="Trypsin-like serine proteases"/>
    <property type="match status" value="2"/>
</dbReference>
<dbReference type="InterPro" id="IPR009003">
    <property type="entry name" value="Peptidase_S1_PA"/>
</dbReference>
<dbReference type="InterPro" id="IPR043504">
    <property type="entry name" value="Peptidase_S1_PA_chymotrypsin"/>
</dbReference>
<dbReference type="InterPro" id="IPR008256">
    <property type="entry name" value="Peptidase_S1B"/>
</dbReference>
<dbReference type="InterPro" id="IPR008353">
    <property type="entry name" value="Peptidase_S1B_tx"/>
</dbReference>
<dbReference type="InterPro" id="IPR001254">
    <property type="entry name" value="Trypsin_dom"/>
</dbReference>
<dbReference type="InterPro" id="IPR028301">
    <property type="entry name" value="V8_his_AS"/>
</dbReference>
<dbReference type="PANTHER" id="PTHR43019:SF23">
    <property type="entry name" value="PROTEASE DO-LIKE 5, CHLOROPLASTIC"/>
    <property type="match status" value="1"/>
</dbReference>
<dbReference type="PANTHER" id="PTHR43019">
    <property type="entry name" value="SERINE ENDOPROTEASE DEGS"/>
    <property type="match status" value="1"/>
</dbReference>
<dbReference type="Pfam" id="PF00089">
    <property type="entry name" value="Trypsin"/>
    <property type="match status" value="1"/>
</dbReference>
<dbReference type="PRINTS" id="PR01774">
    <property type="entry name" value="EXFOLTOXIN"/>
</dbReference>
<dbReference type="PRINTS" id="PR00839">
    <property type="entry name" value="V8PROTEASE"/>
</dbReference>
<dbReference type="SUPFAM" id="SSF50494">
    <property type="entry name" value="Trypsin-like serine proteases"/>
    <property type="match status" value="1"/>
</dbReference>
<dbReference type="PROSITE" id="PS00672">
    <property type="entry name" value="V8_HIS"/>
    <property type="match status" value="1"/>
</dbReference>
<gene>
    <name type="primary">splB</name>
    <name type="ordered locus">SaurJH1_1898</name>
</gene>
<sequence length="240" mass="26141">MNKNVVIKSLATLTILTSVTGIGTTLVEEVQQTAKAENNVTKIQDTNIFPYTGVVAFKSATGFVVGKNTILTNKHVSKNYKVGDRITAHPNSDKGNGGIYSIKKIINYPGKEDVSVIQVEERAIERGPKGFNFNDNVTPFKYAAGAKAGERIKVIGYPHPYKNKYVLYESTGPVMSVEGSSIVYSAHTESGNSGSPVLNSNNELVGIHFASDVKNDDNRNAYGVYFTPEIKKFIAENIDK</sequence>
<comment type="function">
    <text evidence="1">Serine protease that cleaves specifically after the sequence Trp-Glu-Leu-Gln.</text>
</comment>
<comment type="subcellular location">
    <subcellularLocation>
        <location evidence="1">Secreted</location>
    </subcellularLocation>
</comment>
<comment type="similarity">
    <text evidence="3">Belongs to the peptidase S1B family.</text>
</comment>
<comment type="sequence caution" evidence="3">
    <conflict type="erroneous initiation">
        <sequence resource="EMBL-CDS" id="ABR52736"/>
    </conflict>
</comment>
<organism>
    <name type="scientific">Staphylococcus aureus (strain JH1)</name>
    <dbReference type="NCBI Taxonomy" id="359787"/>
    <lineage>
        <taxon>Bacteria</taxon>
        <taxon>Bacillati</taxon>
        <taxon>Bacillota</taxon>
        <taxon>Bacilli</taxon>
        <taxon>Bacillales</taxon>
        <taxon>Staphylococcaceae</taxon>
        <taxon>Staphylococcus</taxon>
    </lineage>
</organism>
<reference key="1">
    <citation type="submission" date="2007-06" db="EMBL/GenBank/DDBJ databases">
        <title>Complete sequence of chromosome of Staphylococcus aureus subsp. aureus JH1.</title>
        <authorList>
            <consortium name="US DOE Joint Genome Institute"/>
            <person name="Copeland A."/>
            <person name="Lucas S."/>
            <person name="Lapidus A."/>
            <person name="Barry K."/>
            <person name="Detter J.C."/>
            <person name="Glavina del Rio T."/>
            <person name="Hammon N."/>
            <person name="Israni S."/>
            <person name="Dalin E."/>
            <person name="Tice H."/>
            <person name="Pitluck S."/>
            <person name="Chain P."/>
            <person name="Malfatti S."/>
            <person name="Shin M."/>
            <person name="Vergez L."/>
            <person name="Schmutz J."/>
            <person name="Larimer F."/>
            <person name="Land M."/>
            <person name="Hauser L."/>
            <person name="Kyrpides N."/>
            <person name="Ivanova N."/>
            <person name="Tomasz A."/>
            <person name="Richardson P."/>
        </authorList>
    </citation>
    <scope>NUCLEOTIDE SEQUENCE [LARGE SCALE GENOMIC DNA]</scope>
    <source>
        <strain>JH1</strain>
    </source>
</reference>
<protein>
    <recommendedName>
        <fullName>Serine protease SplB</fullName>
        <ecNumber>3.4.21.-</ecNumber>
    </recommendedName>
</protein>
<feature type="signal peptide" evidence="1">
    <location>
        <begin position="1"/>
        <end position="36"/>
    </location>
</feature>
<feature type="chain" id="PRO_0000359540" description="Serine protease SplB">
    <location>
        <begin position="37"/>
        <end position="240"/>
    </location>
</feature>
<feature type="active site" description="Charge relay system" evidence="2">
    <location>
        <position position="75"/>
    </location>
</feature>
<feature type="active site" description="Charge relay system" evidence="2">
    <location>
        <position position="113"/>
    </location>
</feature>
<feature type="active site" description="Charge relay system" evidence="2">
    <location>
        <position position="193"/>
    </location>
</feature>
<evidence type="ECO:0000250" key="1"/>
<evidence type="ECO:0000250" key="2">
    <source>
        <dbReference type="UniProtKB" id="Q2FXC3"/>
    </source>
</evidence>
<evidence type="ECO:0000305" key="3"/>
<keyword id="KW-0378">Hydrolase</keyword>
<keyword id="KW-0645">Protease</keyword>
<keyword id="KW-0964">Secreted</keyword>
<keyword id="KW-0720">Serine protease</keyword>
<keyword id="KW-0732">Signal</keyword>
<name>SPLB_STAA2</name>